<gene>
    <name evidence="1" type="primary">rpl30</name>
    <name type="ordered locus">YN1551_1407</name>
</gene>
<comment type="subunit">
    <text evidence="1">Part of the 50S ribosomal subunit.</text>
</comment>
<comment type="similarity">
    <text evidence="1">Belongs to the universal ribosomal protein uL30 family.</text>
</comment>
<evidence type="ECO:0000255" key="1">
    <source>
        <dbReference type="HAMAP-Rule" id="MF_01371"/>
    </source>
</evidence>
<evidence type="ECO:0000305" key="2"/>
<keyword id="KW-0687">Ribonucleoprotein</keyword>
<keyword id="KW-0689">Ribosomal protein</keyword>
<feature type="chain" id="PRO_1000215079" description="Large ribosomal subunit protein uL30">
    <location>
        <begin position="1"/>
        <end position="158"/>
    </location>
</feature>
<proteinExistence type="inferred from homology"/>
<dbReference type="EMBL" id="CP001404">
    <property type="protein sequence ID" value="ACP48498.1"/>
    <property type="molecule type" value="Genomic_DNA"/>
</dbReference>
<dbReference type="SMR" id="C3NH88"/>
<dbReference type="KEGG" id="sin:YN1551_1407"/>
<dbReference type="HOGENOM" id="CLU_055156_6_0_2"/>
<dbReference type="Proteomes" id="UP000006818">
    <property type="component" value="Chromosome"/>
</dbReference>
<dbReference type="GO" id="GO:0022625">
    <property type="term" value="C:cytosolic large ribosomal subunit"/>
    <property type="evidence" value="ECO:0007669"/>
    <property type="project" value="TreeGrafter"/>
</dbReference>
<dbReference type="GO" id="GO:0003723">
    <property type="term" value="F:RNA binding"/>
    <property type="evidence" value="ECO:0007669"/>
    <property type="project" value="TreeGrafter"/>
</dbReference>
<dbReference type="GO" id="GO:0003735">
    <property type="term" value="F:structural constituent of ribosome"/>
    <property type="evidence" value="ECO:0007669"/>
    <property type="project" value="InterPro"/>
</dbReference>
<dbReference type="GO" id="GO:0000463">
    <property type="term" value="P:maturation of LSU-rRNA from tricistronic rRNA transcript (SSU-rRNA, 5.8S rRNA, LSU-rRNA)"/>
    <property type="evidence" value="ECO:0007669"/>
    <property type="project" value="TreeGrafter"/>
</dbReference>
<dbReference type="GO" id="GO:0006412">
    <property type="term" value="P:translation"/>
    <property type="evidence" value="ECO:0007669"/>
    <property type="project" value="UniProtKB-UniRule"/>
</dbReference>
<dbReference type="CDD" id="cd01657">
    <property type="entry name" value="Ribosomal_L7_archeal_euk"/>
    <property type="match status" value="1"/>
</dbReference>
<dbReference type="Gene3D" id="1.10.15.30">
    <property type="match status" value="1"/>
</dbReference>
<dbReference type="Gene3D" id="3.30.1390.20">
    <property type="entry name" value="Ribosomal protein L30, ferredoxin-like fold domain"/>
    <property type="match status" value="1"/>
</dbReference>
<dbReference type="HAMAP" id="MF_01371_A">
    <property type="entry name" value="Ribosomal_uL30_A"/>
    <property type="match status" value="1"/>
</dbReference>
<dbReference type="InterPro" id="IPR036919">
    <property type="entry name" value="Ribo_uL30_ferredoxin-like_sf"/>
</dbReference>
<dbReference type="InterPro" id="IPR039699">
    <property type="entry name" value="Ribosomal_uL30"/>
</dbReference>
<dbReference type="InterPro" id="IPR005997">
    <property type="entry name" value="Ribosomal_uL30_arc"/>
</dbReference>
<dbReference type="InterPro" id="IPR035808">
    <property type="entry name" value="Ribosomal_uL30_euk_arc"/>
</dbReference>
<dbReference type="InterPro" id="IPR016082">
    <property type="entry name" value="Ribosomal_uL30_ferredoxin-like"/>
</dbReference>
<dbReference type="NCBIfam" id="NF004711">
    <property type="entry name" value="PRK06049.1"/>
    <property type="match status" value="1"/>
</dbReference>
<dbReference type="NCBIfam" id="TIGR01309">
    <property type="entry name" value="uL30_arch"/>
    <property type="match status" value="1"/>
</dbReference>
<dbReference type="PANTHER" id="PTHR11524">
    <property type="entry name" value="60S RIBOSOMAL PROTEIN L7"/>
    <property type="match status" value="1"/>
</dbReference>
<dbReference type="PANTHER" id="PTHR11524:SF16">
    <property type="entry name" value="LARGE RIBOSOMAL SUBUNIT PROTEIN UL30"/>
    <property type="match status" value="1"/>
</dbReference>
<dbReference type="Pfam" id="PF00327">
    <property type="entry name" value="Ribosomal_L30"/>
    <property type="match status" value="1"/>
</dbReference>
<dbReference type="SUPFAM" id="SSF55129">
    <property type="entry name" value="Ribosomal protein L30p/L7e"/>
    <property type="match status" value="1"/>
</dbReference>
<protein>
    <recommendedName>
        <fullName evidence="1">Large ribosomal subunit protein uL30</fullName>
    </recommendedName>
    <alternativeName>
        <fullName evidence="2">50S ribosomal protein L30</fullName>
    </alternativeName>
</protein>
<name>RL30_SACI1</name>
<sequence length="158" mass="18648">MVELLGIIRIRGWAKAPWYINETLEMLRLRYNFNTMMYPKTSQILGMLNKVSPYVTWGEIDPDTLKLLIIKRLETAKGDKVSDSYVKEVLKIENIDTMVKQLYEGKIYLHKLDQYFKLPIRLHPPKGGFKGSVKRPYKNKGEFGYRGDKINELMRRMM</sequence>
<reference key="1">
    <citation type="journal article" date="2009" name="Proc. Natl. Acad. Sci. U.S.A.">
        <title>Biogeography of the Sulfolobus islandicus pan-genome.</title>
        <authorList>
            <person name="Reno M.L."/>
            <person name="Held N.L."/>
            <person name="Fields C.J."/>
            <person name="Burke P.V."/>
            <person name="Whitaker R.J."/>
        </authorList>
    </citation>
    <scope>NUCLEOTIDE SEQUENCE [LARGE SCALE GENOMIC DNA]</scope>
    <source>
        <strain>Y.N.15.51 / Yellowstone #2</strain>
    </source>
</reference>
<organism>
    <name type="scientific">Saccharolobus islandicus (strain Y.N.15.51 / Yellowstone #2)</name>
    <name type="common">Sulfolobus islandicus</name>
    <dbReference type="NCBI Taxonomy" id="419942"/>
    <lineage>
        <taxon>Archaea</taxon>
        <taxon>Thermoproteota</taxon>
        <taxon>Thermoprotei</taxon>
        <taxon>Sulfolobales</taxon>
        <taxon>Sulfolobaceae</taxon>
        <taxon>Saccharolobus</taxon>
    </lineage>
</organism>
<accession>C3NH88</accession>